<comment type="catalytic activity">
    <reaction evidence="1">
        <text>tRNA(Arg) + L-arginine + ATP = L-arginyl-tRNA(Arg) + AMP + diphosphate</text>
        <dbReference type="Rhea" id="RHEA:20301"/>
        <dbReference type="Rhea" id="RHEA-COMP:9658"/>
        <dbReference type="Rhea" id="RHEA-COMP:9673"/>
        <dbReference type="ChEBI" id="CHEBI:30616"/>
        <dbReference type="ChEBI" id="CHEBI:32682"/>
        <dbReference type="ChEBI" id="CHEBI:33019"/>
        <dbReference type="ChEBI" id="CHEBI:78442"/>
        <dbReference type="ChEBI" id="CHEBI:78513"/>
        <dbReference type="ChEBI" id="CHEBI:456215"/>
        <dbReference type="EC" id="6.1.1.19"/>
    </reaction>
</comment>
<comment type="subunit">
    <text evidence="1">Monomer.</text>
</comment>
<comment type="subcellular location">
    <subcellularLocation>
        <location evidence="1">Cytoplasm</location>
    </subcellularLocation>
</comment>
<comment type="similarity">
    <text evidence="1">Belongs to the class-I aminoacyl-tRNA synthetase family.</text>
</comment>
<protein>
    <recommendedName>
        <fullName evidence="1">Arginine--tRNA ligase</fullName>
        <ecNumber evidence="1">6.1.1.19</ecNumber>
    </recommendedName>
    <alternativeName>
        <fullName evidence="1">Arginyl-tRNA synthetase</fullName>
        <shortName evidence="1">ArgRS</shortName>
    </alternativeName>
</protein>
<name>SYR_YERPG</name>
<proteinExistence type="inferred from homology"/>
<accession>A9QYY6</accession>
<keyword id="KW-0030">Aminoacyl-tRNA synthetase</keyword>
<keyword id="KW-0067">ATP-binding</keyword>
<keyword id="KW-0963">Cytoplasm</keyword>
<keyword id="KW-0436">Ligase</keyword>
<keyword id="KW-0547">Nucleotide-binding</keyword>
<keyword id="KW-0648">Protein biosynthesis</keyword>
<organism>
    <name type="scientific">Yersinia pestis bv. Antiqua (strain Angola)</name>
    <dbReference type="NCBI Taxonomy" id="349746"/>
    <lineage>
        <taxon>Bacteria</taxon>
        <taxon>Pseudomonadati</taxon>
        <taxon>Pseudomonadota</taxon>
        <taxon>Gammaproteobacteria</taxon>
        <taxon>Enterobacterales</taxon>
        <taxon>Yersiniaceae</taxon>
        <taxon>Yersinia</taxon>
    </lineage>
</organism>
<reference key="1">
    <citation type="journal article" date="2010" name="J. Bacteriol.">
        <title>Genome sequence of the deep-rooted Yersinia pestis strain Angola reveals new insights into the evolution and pangenome of the plague bacterium.</title>
        <authorList>
            <person name="Eppinger M."/>
            <person name="Worsham P.L."/>
            <person name="Nikolich M.P."/>
            <person name="Riley D.R."/>
            <person name="Sebastian Y."/>
            <person name="Mou S."/>
            <person name="Achtman M."/>
            <person name="Lindler L.E."/>
            <person name="Ravel J."/>
        </authorList>
    </citation>
    <scope>NUCLEOTIDE SEQUENCE [LARGE SCALE GENOMIC DNA]</scope>
    <source>
        <strain>Angola</strain>
    </source>
</reference>
<evidence type="ECO:0000255" key="1">
    <source>
        <dbReference type="HAMAP-Rule" id="MF_00123"/>
    </source>
</evidence>
<dbReference type="EC" id="6.1.1.19" evidence="1"/>
<dbReference type="EMBL" id="CP000901">
    <property type="protein sequence ID" value="ABX88467.1"/>
    <property type="molecule type" value="Genomic_DNA"/>
</dbReference>
<dbReference type="RefSeq" id="WP_002211212.1">
    <property type="nucleotide sequence ID" value="NZ_CP009935.1"/>
</dbReference>
<dbReference type="SMR" id="A9QYY6"/>
<dbReference type="GeneID" id="57976615"/>
<dbReference type="KEGG" id="ypg:YpAngola_A2434"/>
<dbReference type="PATRIC" id="fig|349746.12.peg.3451"/>
<dbReference type="GO" id="GO:0005737">
    <property type="term" value="C:cytoplasm"/>
    <property type="evidence" value="ECO:0007669"/>
    <property type="project" value="UniProtKB-SubCell"/>
</dbReference>
<dbReference type="GO" id="GO:0004814">
    <property type="term" value="F:arginine-tRNA ligase activity"/>
    <property type="evidence" value="ECO:0007669"/>
    <property type="project" value="UniProtKB-UniRule"/>
</dbReference>
<dbReference type="GO" id="GO:0005524">
    <property type="term" value="F:ATP binding"/>
    <property type="evidence" value="ECO:0007669"/>
    <property type="project" value="UniProtKB-UniRule"/>
</dbReference>
<dbReference type="GO" id="GO:0006420">
    <property type="term" value="P:arginyl-tRNA aminoacylation"/>
    <property type="evidence" value="ECO:0007669"/>
    <property type="project" value="UniProtKB-UniRule"/>
</dbReference>
<dbReference type="CDD" id="cd07956">
    <property type="entry name" value="Anticodon_Ia_Arg"/>
    <property type="match status" value="1"/>
</dbReference>
<dbReference type="CDD" id="cd00671">
    <property type="entry name" value="ArgRS_core"/>
    <property type="match status" value="1"/>
</dbReference>
<dbReference type="FunFam" id="1.10.730.10:FF:000001">
    <property type="entry name" value="Arginine--tRNA ligase"/>
    <property type="match status" value="1"/>
</dbReference>
<dbReference type="FunFam" id="3.30.1360.70:FF:000001">
    <property type="entry name" value="Arginine--tRNA ligase"/>
    <property type="match status" value="1"/>
</dbReference>
<dbReference type="FunFam" id="3.40.50.620:FF:000030">
    <property type="entry name" value="Arginine--tRNA ligase"/>
    <property type="match status" value="1"/>
</dbReference>
<dbReference type="Gene3D" id="3.30.1360.70">
    <property type="entry name" value="Arginyl tRNA synthetase N-terminal domain"/>
    <property type="match status" value="1"/>
</dbReference>
<dbReference type="Gene3D" id="3.40.50.620">
    <property type="entry name" value="HUPs"/>
    <property type="match status" value="1"/>
</dbReference>
<dbReference type="Gene3D" id="1.10.730.10">
    <property type="entry name" value="Isoleucyl-tRNA Synthetase, Domain 1"/>
    <property type="match status" value="1"/>
</dbReference>
<dbReference type="HAMAP" id="MF_00123">
    <property type="entry name" value="Arg_tRNA_synth"/>
    <property type="match status" value="1"/>
</dbReference>
<dbReference type="InterPro" id="IPR001412">
    <property type="entry name" value="aa-tRNA-synth_I_CS"/>
</dbReference>
<dbReference type="InterPro" id="IPR001278">
    <property type="entry name" value="Arg-tRNA-ligase"/>
</dbReference>
<dbReference type="InterPro" id="IPR005148">
    <property type="entry name" value="Arg-tRNA-synth_N"/>
</dbReference>
<dbReference type="InterPro" id="IPR036695">
    <property type="entry name" value="Arg-tRNA-synth_N_sf"/>
</dbReference>
<dbReference type="InterPro" id="IPR035684">
    <property type="entry name" value="ArgRS_core"/>
</dbReference>
<dbReference type="InterPro" id="IPR008909">
    <property type="entry name" value="DALR_anticod-bd"/>
</dbReference>
<dbReference type="InterPro" id="IPR014729">
    <property type="entry name" value="Rossmann-like_a/b/a_fold"/>
</dbReference>
<dbReference type="InterPro" id="IPR009080">
    <property type="entry name" value="tRNAsynth_Ia_anticodon-bd"/>
</dbReference>
<dbReference type="NCBIfam" id="TIGR00456">
    <property type="entry name" value="argS"/>
    <property type="match status" value="1"/>
</dbReference>
<dbReference type="PANTHER" id="PTHR11956:SF5">
    <property type="entry name" value="ARGININE--TRNA LIGASE, CYTOPLASMIC"/>
    <property type="match status" value="1"/>
</dbReference>
<dbReference type="PANTHER" id="PTHR11956">
    <property type="entry name" value="ARGINYL-TRNA SYNTHETASE"/>
    <property type="match status" value="1"/>
</dbReference>
<dbReference type="Pfam" id="PF03485">
    <property type="entry name" value="Arg_tRNA_synt_N"/>
    <property type="match status" value="1"/>
</dbReference>
<dbReference type="Pfam" id="PF05746">
    <property type="entry name" value="DALR_1"/>
    <property type="match status" value="1"/>
</dbReference>
<dbReference type="Pfam" id="PF00750">
    <property type="entry name" value="tRNA-synt_1d"/>
    <property type="match status" value="1"/>
</dbReference>
<dbReference type="PRINTS" id="PR01038">
    <property type="entry name" value="TRNASYNTHARG"/>
</dbReference>
<dbReference type="SMART" id="SM01016">
    <property type="entry name" value="Arg_tRNA_synt_N"/>
    <property type="match status" value="1"/>
</dbReference>
<dbReference type="SMART" id="SM00836">
    <property type="entry name" value="DALR_1"/>
    <property type="match status" value="1"/>
</dbReference>
<dbReference type="SUPFAM" id="SSF47323">
    <property type="entry name" value="Anticodon-binding domain of a subclass of class I aminoacyl-tRNA synthetases"/>
    <property type="match status" value="1"/>
</dbReference>
<dbReference type="SUPFAM" id="SSF55190">
    <property type="entry name" value="Arginyl-tRNA synthetase (ArgRS), N-terminal 'additional' domain"/>
    <property type="match status" value="1"/>
</dbReference>
<dbReference type="SUPFAM" id="SSF52374">
    <property type="entry name" value="Nucleotidylyl transferase"/>
    <property type="match status" value="1"/>
</dbReference>
<dbReference type="PROSITE" id="PS00178">
    <property type="entry name" value="AA_TRNA_LIGASE_I"/>
    <property type="match status" value="1"/>
</dbReference>
<sequence>MNIQALLSDKVSQALIAAGAPADCEAQVRQSAKAQFGDYQANGVMAVAKKLGMQPRQLAERVVELLDLTGIASKIEIAGPGFINIFLDRQWVAEKVEYALTAPKLGVAPVEPQTIVVDYSAPNVAKQMHVGHLRSTIIGDAAVRTLAFLGHNVIRANHVGDWGTQFGMLIAYLEKMQNENASDMGLSDLELFYQQAKKTYDEDEEFALRARAYVVKLQSGDEYCRQMWRKLVDITMAQNQVAYDRLNVTLTKDDVMGESLYNAMLPEIVADLKAKGLAVESEGATVVYLDEYKNKDGEPMGVIIQKKDGGYLYTTTDIACAKYRYETLGADRILYYIDSRQHQHLMQAWTIVRKAGYVPESVPLEHHMFGMMLGKDGKPFKTRSGGTVKLSDLLDEAVERAGKLIAEKNPDMPADELKQVINAVGIGAVKYADLSKSRTTDYIFDWDNMLALDGNTAPYMQYAYTRVVSVFRRAGVDETSLTLPLVVTEDREATLATRLLQFEEIITTVAREGTPHVMCSYLYDLAGLFSSFYEHCQILNAESEEIRQSRLKLAMLTAKTLKQGLDTLGIQTVERM</sequence>
<gene>
    <name evidence="1" type="primary">argS</name>
    <name type="ordered locus">YpAngola_A2434</name>
</gene>
<feature type="chain" id="PRO_1000095426" description="Arginine--tRNA ligase">
    <location>
        <begin position="1"/>
        <end position="576"/>
    </location>
</feature>
<feature type="short sequence motif" description="'HIGH' region">
    <location>
        <begin position="122"/>
        <end position="132"/>
    </location>
</feature>